<accession>Q5E735</accession>
<gene>
    <name evidence="1" type="primary">nanE</name>
    <name type="ordered locus">VF_0666</name>
</gene>
<proteinExistence type="inferred from homology"/>
<feature type="chain" id="PRO_0000179818" description="Putative N-acetylmannosamine-6-phosphate 2-epimerase">
    <location>
        <begin position="1"/>
        <end position="235"/>
    </location>
</feature>
<sequence length="235" mass="25153">MGSNIDKTLNALSQGFVSSCQPVDDGPMDKPEIVAAMAMASVEGGAIGLRIEGIDNLKAVRPHVSVPIIGIIKRDLDDSEVRITPYIEDVIALKEAGADIIAIDATHRPRPVPVEELVKKIQSLGCLVMADSSTYEEGMFCHGLGVEIIGTTLSGYTTPVTPKEPDFPFIQQLANQGCFVMAEGRFNSPQLAREAIEAGASCVTVGSAITRIEHICGWFKSEVELGKKNMVKDIA</sequence>
<keyword id="KW-0119">Carbohydrate metabolism</keyword>
<keyword id="KW-0413">Isomerase</keyword>
<keyword id="KW-1185">Reference proteome</keyword>
<evidence type="ECO:0000255" key="1">
    <source>
        <dbReference type="HAMAP-Rule" id="MF_01235"/>
    </source>
</evidence>
<evidence type="ECO:0000305" key="2"/>
<reference key="1">
    <citation type="journal article" date="2005" name="Proc. Natl. Acad. Sci. U.S.A.">
        <title>Complete genome sequence of Vibrio fischeri: a symbiotic bacterium with pathogenic congeners.</title>
        <authorList>
            <person name="Ruby E.G."/>
            <person name="Urbanowski M."/>
            <person name="Campbell J."/>
            <person name="Dunn A."/>
            <person name="Faini M."/>
            <person name="Gunsalus R."/>
            <person name="Lostroh P."/>
            <person name="Lupp C."/>
            <person name="McCann J."/>
            <person name="Millikan D."/>
            <person name="Schaefer A."/>
            <person name="Stabb E."/>
            <person name="Stevens A."/>
            <person name="Visick K."/>
            <person name="Whistler C."/>
            <person name="Greenberg E.P."/>
        </authorList>
    </citation>
    <scope>NUCLEOTIDE SEQUENCE [LARGE SCALE GENOMIC DNA]</scope>
    <source>
        <strain>ATCC 700601 / ES114</strain>
    </source>
</reference>
<dbReference type="EC" id="5.1.3.9" evidence="1"/>
<dbReference type="EMBL" id="CP000020">
    <property type="protein sequence ID" value="AAW85161.1"/>
    <property type="status" value="ALT_INIT"/>
    <property type="molecule type" value="Genomic_DNA"/>
</dbReference>
<dbReference type="RefSeq" id="WP_011261396.1">
    <property type="nucleotide sequence ID" value="NZ_CAWLES010000001.1"/>
</dbReference>
<dbReference type="RefSeq" id="YP_204049.1">
    <property type="nucleotide sequence ID" value="NC_006840.2"/>
</dbReference>
<dbReference type="SMR" id="Q5E735"/>
<dbReference type="STRING" id="312309.VF_0666"/>
<dbReference type="EnsemblBacteria" id="AAW85161">
    <property type="protein sequence ID" value="AAW85161"/>
    <property type="gene ID" value="VF_0666"/>
</dbReference>
<dbReference type="GeneID" id="54163321"/>
<dbReference type="KEGG" id="vfi:VF_0666"/>
<dbReference type="PATRIC" id="fig|312309.11.peg.659"/>
<dbReference type="eggNOG" id="COG3010">
    <property type="taxonomic scope" value="Bacteria"/>
</dbReference>
<dbReference type="HOGENOM" id="CLU_086300_0_0_6"/>
<dbReference type="OrthoDB" id="9810372at2"/>
<dbReference type="UniPathway" id="UPA00629">
    <property type="reaction ID" value="UER00682"/>
</dbReference>
<dbReference type="Proteomes" id="UP000000537">
    <property type="component" value="Chromosome I"/>
</dbReference>
<dbReference type="GO" id="GO:0005829">
    <property type="term" value="C:cytosol"/>
    <property type="evidence" value="ECO:0007669"/>
    <property type="project" value="TreeGrafter"/>
</dbReference>
<dbReference type="GO" id="GO:0047465">
    <property type="term" value="F:N-acylglucosamine-6-phosphate 2-epimerase activity"/>
    <property type="evidence" value="ECO:0007669"/>
    <property type="project" value="UniProtKB-EC"/>
</dbReference>
<dbReference type="GO" id="GO:0005975">
    <property type="term" value="P:carbohydrate metabolic process"/>
    <property type="evidence" value="ECO:0007669"/>
    <property type="project" value="UniProtKB-UniRule"/>
</dbReference>
<dbReference type="GO" id="GO:0006053">
    <property type="term" value="P:N-acetylmannosamine catabolic process"/>
    <property type="evidence" value="ECO:0007669"/>
    <property type="project" value="TreeGrafter"/>
</dbReference>
<dbReference type="GO" id="GO:0019262">
    <property type="term" value="P:N-acetylneuraminate catabolic process"/>
    <property type="evidence" value="ECO:0007669"/>
    <property type="project" value="UniProtKB-UniRule"/>
</dbReference>
<dbReference type="CDD" id="cd04729">
    <property type="entry name" value="NanE"/>
    <property type="match status" value="1"/>
</dbReference>
<dbReference type="FunFam" id="3.20.20.70:FF:000035">
    <property type="entry name" value="Putative N-acetylmannosamine-6-phosphate 2-epimerase"/>
    <property type="match status" value="1"/>
</dbReference>
<dbReference type="Gene3D" id="3.20.20.70">
    <property type="entry name" value="Aldolase class I"/>
    <property type="match status" value="1"/>
</dbReference>
<dbReference type="HAMAP" id="MF_01235">
    <property type="entry name" value="ManNAc6P_epimer"/>
    <property type="match status" value="1"/>
</dbReference>
<dbReference type="InterPro" id="IPR013785">
    <property type="entry name" value="Aldolase_TIM"/>
</dbReference>
<dbReference type="InterPro" id="IPR007260">
    <property type="entry name" value="NanE"/>
</dbReference>
<dbReference type="InterPro" id="IPR011060">
    <property type="entry name" value="RibuloseP-bd_barrel"/>
</dbReference>
<dbReference type="NCBIfam" id="NF002231">
    <property type="entry name" value="PRK01130.1"/>
    <property type="match status" value="1"/>
</dbReference>
<dbReference type="PANTHER" id="PTHR36204">
    <property type="entry name" value="N-ACETYLMANNOSAMINE-6-PHOSPHATE 2-EPIMERASE-RELATED"/>
    <property type="match status" value="1"/>
</dbReference>
<dbReference type="PANTHER" id="PTHR36204:SF1">
    <property type="entry name" value="N-ACETYLMANNOSAMINE-6-PHOSPHATE 2-EPIMERASE-RELATED"/>
    <property type="match status" value="1"/>
</dbReference>
<dbReference type="Pfam" id="PF04131">
    <property type="entry name" value="NanE"/>
    <property type="match status" value="1"/>
</dbReference>
<dbReference type="SUPFAM" id="SSF51366">
    <property type="entry name" value="Ribulose-phoshate binding barrel"/>
    <property type="match status" value="1"/>
</dbReference>
<comment type="function">
    <text evidence="1">Converts N-acetylmannosamine-6-phosphate (ManNAc-6-P) to N-acetylglucosamine-6-phosphate (GlcNAc-6-P).</text>
</comment>
<comment type="catalytic activity">
    <reaction evidence="1">
        <text>an N-acyl-D-glucosamine 6-phosphate = an N-acyl-D-mannosamine 6-phosphate</text>
        <dbReference type="Rhea" id="RHEA:23932"/>
        <dbReference type="ChEBI" id="CHEBI:57599"/>
        <dbReference type="ChEBI" id="CHEBI:57666"/>
        <dbReference type="EC" id="5.1.3.9"/>
    </reaction>
</comment>
<comment type="pathway">
    <text evidence="1">Amino-sugar metabolism; N-acetylneuraminate degradation; D-fructose 6-phosphate from N-acetylneuraminate: step 3/5.</text>
</comment>
<comment type="similarity">
    <text evidence="1">Belongs to the NanE family.</text>
</comment>
<comment type="sequence caution" evidence="2">
    <conflict type="erroneous initiation">
        <sequence resource="EMBL-CDS" id="AAW85161"/>
    </conflict>
</comment>
<protein>
    <recommendedName>
        <fullName evidence="1">Putative N-acetylmannosamine-6-phosphate 2-epimerase</fullName>
        <ecNumber evidence="1">5.1.3.9</ecNumber>
    </recommendedName>
    <alternativeName>
        <fullName evidence="1">ManNAc-6-P epimerase</fullName>
    </alternativeName>
</protein>
<organism>
    <name type="scientific">Aliivibrio fischeri (strain ATCC 700601 / ES114)</name>
    <name type="common">Vibrio fischeri</name>
    <dbReference type="NCBI Taxonomy" id="312309"/>
    <lineage>
        <taxon>Bacteria</taxon>
        <taxon>Pseudomonadati</taxon>
        <taxon>Pseudomonadota</taxon>
        <taxon>Gammaproteobacteria</taxon>
        <taxon>Vibrionales</taxon>
        <taxon>Vibrionaceae</taxon>
        <taxon>Aliivibrio</taxon>
    </lineage>
</organism>
<name>NANE_ALIF1</name>